<gene>
    <name evidence="1" type="primary">lig</name>
    <name type="ordered locus">Mflv_4321</name>
</gene>
<evidence type="ECO:0000255" key="1">
    <source>
        <dbReference type="HAMAP-Rule" id="MF_00407"/>
    </source>
</evidence>
<name>DNLI_MYCGI</name>
<accession>A4TDS2</accession>
<reference key="1">
    <citation type="submission" date="2007-04" db="EMBL/GenBank/DDBJ databases">
        <title>Complete sequence of chromosome of Mycobacterium gilvum PYR-GCK.</title>
        <authorList>
            <consortium name="US DOE Joint Genome Institute"/>
            <person name="Copeland A."/>
            <person name="Lucas S."/>
            <person name="Lapidus A."/>
            <person name="Barry K."/>
            <person name="Detter J.C."/>
            <person name="Glavina del Rio T."/>
            <person name="Hammon N."/>
            <person name="Israni S."/>
            <person name="Dalin E."/>
            <person name="Tice H."/>
            <person name="Pitluck S."/>
            <person name="Chain P."/>
            <person name="Malfatti S."/>
            <person name="Shin M."/>
            <person name="Vergez L."/>
            <person name="Schmutz J."/>
            <person name="Larimer F."/>
            <person name="Land M."/>
            <person name="Hauser L."/>
            <person name="Kyrpides N."/>
            <person name="Mikhailova N."/>
            <person name="Miller C."/>
            <person name="Richardson P."/>
        </authorList>
    </citation>
    <scope>NUCLEOTIDE SEQUENCE [LARGE SCALE GENOMIC DNA]</scope>
    <source>
        <strain>PYR-GCK</strain>
    </source>
</reference>
<comment type="function">
    <text evidence="1">DNA ligase that seals nicks in double-stranded DNA during DNA replication, DNA recombination and DNA repair.</text>
</comment>
<comment type="catalytic activity">
    <reaction evidence="1">
        <text>ATP + (deoxyribonucleotide)n-3'-hydroxyl + 5'-phospho-(deoxyribonucleotide)m = (deoxyribonucleotide)n+m + AMP + diphosphate.</text>
        <dbReference type="EC" id="6.5.1.1"/>
    </reaction>
</comment>
<comment type="cofactor">
    <cofactor evidence="1">
        <name>Mg(2+)</name>
        <dbReference type="ChEBI" id="CHEBI:18420"/>
    </cofactor>
</comment>
<comment type="similarity">
    <text evidence="1">Belongs to the ATP-dependent DNA ligase family.</text>
</comment>
<feature type="chain" id="PRO_0000365224" description="Probable DNA ligase">
    <location>
        <begin position="1"/>
        <end position="511"/>
    </location>
</feature>
<feature type="active site" description="N6-AMP-lysine intermediate" evidence="1">
    <location>
        <position position="211"/>
    </location>
</feature>
<feature type="binding site" evidence="1">
    <location>
        <position position="209"/>
    </location>
    <ligand>
        <name>ATP</name>
        <dbReference type="ChEBI" id="CHEBI:30616"/>
    </ligand>
</feature>
<feature type="binding site" evidence="1">
    <location>
        <position position="216"/>
    </location>
    <ligand>
        <name>ATP</name>
        <dbReference type="ChEBI" id="CHEBI:30616"/>
    </ligand>
</feature>
<feature type="binding site" evidence="1">
    <location>
        <position position="231"/>
    </location>
    <ligand>
        <name>ATP</name>
        <dbReference type="ChEBI" id="CHEBI:30616"/>
    </ligand>
</feature>
<feature type="binding site" evidence="1">
    <location>
        <position position="260"/>
    </location>
    <ligand>
        <name>ATP</name>
        <dbReference type="ChEBI" id="CHEBI:30616"/>
    </ligand>
</feature>
<feature type="binding site" evidence="1">
    <location>
        <position position="299"/>
    </location>
    <ligand>
        <name>ATP</name>
        <dbReference type="ChEBI" id="CHEBI:30616"/>
    </ligand>
</feature>
<feature type="binding site" evidence="1">
    <location>
        <position position="371"/>
    </location>
    <ligand>
        <name>ATP</name>
        <dbReference type="ChEBI" id="CHEBI:30616"/>
    </ligand>
</feature>
<feature type="binding site" evidence="1">
    <location>
        <position position="377"/>
    </location>
    <ligand>
        <name>ATP</name>
        <dbReference type="ChEBI" id="CHEBI:30616"/>
    </ligand>
</feature>
<sequence length="511" mass="54366">MLLVDVAGASADVAASSARLAKIARIAELLRRAGREDVAIVVSWLSGELTQRQIGVGWASLRSVPAAAAEPTLTVAEVERRFGEIGATAGRGSQARRAQLLADLFSAATDVEQTFLRRLLTGELRQGALVGVMADAVAKAADLPAATVRRAAMLGGDLPAVAAAALTDGDAGLAQFTLQAGKAVGPMLAQTAADVTDALDRLGGTAMFEAKLDGARVQIHRRGDSVSIFTRSLDDVTARLPEVVEATLALPVTDLIADAEAIALRPDGRPHRFQVTASRFGRRGGTSDTASNPLSVFFFDLLHVDGVDLLDAPAHERIARLDAVTPDSQRVDRLVTSDPGAAQEFFDRTLAAGHEGVMAKSTVAPYEAGRRGAGWLKVKPVHTLDLVVLAVEWGSGRRSGKLSNIHLGARDPGTGGFVMLGKTFKGMTDEMLAWQTRRFLDLADGDATDHYVVKVRPEQVVEIAFDGLQTSTRYPGGMALRFARVVRYRDDKAATDADTIDTVREIYERGN</sequence>
<keyword id="KW-0067">ATP-binding</keyword>
<keyword id="KW-0131">Cell cycle</keyword>
<keyword id="KW-0132">Cell division</keyword>
<keyword id="KW-0227">DNA damage</keyword>
<keyword id="KW-0233">DNA recombination</keyword>
<keyword id="KW-0234">DNA repair</keyword>
<keyword id="KW-0235">DNA replication</keyword>
<keyword id="KW-0436">Ligase</keyword>
<keyword id="KW-0460">Magnesium</keyword>
<keyword id="KW-0479">Metal-binding</keyword>
<keyword id="KW-0547">Nucleotide-binding</keyword>
<protein>
    <recommendedName>
        <fullName evidence="1">Probable DNA ligase</fullName>
        <ecNumber evidence="1">6.5.1.1</ecNumber>
    </recommendedName>
    <alternativeName>
        <fullName evidence="1">Polydeoxyribonucleotide synthase [ATP]</fullName>
    </alternativeName>
</protein>
<dbReference type="EC" id="6.5.1.1" evidence="1"/>
<dbReference type="EMBL" id="CP000656">
    <property type="protein sequence ID" value="ABP46790.1"/>
    <property type="molecule type" value="Genomic_DNA"/>
</dbReference>
<dbReference type="SMR" id="A4TDS2"/>
<dbReference type="STRING" id="350054.Mflv_4321"/>
<dbReference type="KEGG" id="mgi:Mflv_4321"/>
<dbReference type="eggNOG" id="COG1793">
    <property type="taxonomic scope" value="Bacteria"/>
</dbReference>
<dbReference type="HOGENOM" id="CLU_005138_6_1_11"/>
<dbReference type="OrthoDB" id="3733803at2"/>
<dbReference type="GO" id="GO:0005524">
    <property type="term" value="F:ATP binding"/>
    <property type="evidence" value="ECO:0007669"/>
    <property type="project" value="UniProtKB-UniRule"/>
</dbReference>
<dbReference type="GO" id="GO:0003677">
    <property type="term" value="F:DNA binding"/>
    <property type="evidence" value="ECO:0007669"/>
    <property type="project" value="InterPro"/>
</dbReference>
<dbReference type="GO" id="GO:0003910">
    <property type="term" value="F:DNA ligase (ATP) activity"/>
    <property type="evidence" value="ECO:0007669"/>
    <property type="project" value="UniProtKB-UniRule"/>
</dbReference>
<dbReference type="GO" id="GO:0046872">
    <property type="term" value="F:metal ion binding"/>
    <property type="evidence" value="ECO:0007669"/>
    <property type="project" value="UniProtKB-KW"/>
</dbReference>
<dbReference type="GO" id="GO:0051301">
    <property type="term" value="P:cell division"/>
    <property type="evidence" value="ECO:0007669"/>
    <property type="project" value="UniProtKB-KW"/>
</dbReference>
<dbReference type="GO" id="GO:0071897">
    <property type="term" value="P:DNA biosynthetic process"/>
    <property type="evidence" value="ECO:0007669"/>
    <property type="project" value="InterPro"/>
</dbReference>
<dbReference type="GO" id="GO:0006310">
    <property type="term" value="P:DNA recombination"/>
    <property type="evidence" value="ECO:0007669"/>
    <property type="project" value="UniProtKB-UniRule"/>
</dbReference>
<dbReference type="GO" id="GO:0006281">
    <property type="term" value="P:DNA repair"/>
    <property type="evidence" value="ECO:0007669"/>
    <property type="project" value="UniProtKB-UniRule"/>
</dbReference>
<dbReference type="GO" id="GO:0006260">
    <property type="term" value="P:DNA replication"/>
    <property type="evidence" value="ECO:0007669"/>
    <property type="project" value="UniProtKB-UniRule"/>
</dbReference>
<dbReference type="CDD" id="cd07901">
    <property type="entry name" value="Adenylation_DNA_ligase_Arch_LigB"/>
    <property type="match status" value="1"/>
</dbReference>
<dbReference type="CDD" id="cd07972">
    <property type="entry name" value="OBF_DNA_ligase_Arch_LigB"/>
    <property type="match status" value="1"/>
</dbReference>
<dbReference type="FunFam" id="2.40.50.140:FF:000163">
    <property type="entry name" value="Probable DNA ligase"/>
    <property type="match status" value="1"/>
</dbReference>
<dbReference type="Gene3D" id="1.10.3260.10">
    <property type="entry name" value="DNA ligase, ATP-dependent, N-terminal domain"/>
    <property type="match status" value="1"/>
</dbReference>
<dbReference type="Gene3D" id="3.30.470.30">
    <property type="entry name" value="DNA ligase/mRNA capping enzyme"/>
    <property type="match status" value="1"/>
</dbReference>
<dbReference type="Gene3D" id="2.40.50.140">
    <property type="entry name" value="Nucleic acid-binding proteins"/>
    <property type="match status" value="1"/>
</dbReference>
<dbReference type="HAMAP" id="MF_00407">
    <property type="entry name" value="DNA_ligase"/>
    <property type="match status" value="1"/>
</dbReference>
<dbReference type="InterPro" id="IPR050191">
    <property type="entry name" value="ATP-dep_DNA_ligase"/>
</dbReference>
<dbReference type="InterPro" id="IPR022865">
    <property type="entry name" value="DNA_ligae_ATP-dep_bac/arc"/>
</dbReference>
<dbReference type="InterPro" id="IPR000977">
    <property type="entry name" value="DNA_ligase_ATP-dep"/>
</dbReference>
<dbReference type="InterPro" id="IPR012309">
    <property type="entry name" value="DNA_ligase_ATP-dep_C"/>
</dbReference>
<dbReference type="InterPro" id="IPR012310">
    <property type="entry name" value="DNA_ligase_ATP-dep_cent"/>
</dbReference>
<dbReference type="InterPro" id="IPR016059">
    <property type="entry name" value="DNA_ligase_ATP-dep_CS"/>
</dbReference>
<dbReference type="InterPro" id="IPR012308">
    <property type="entry name" value="DNA_ligase_ATP-dep_N"/>
</dbReference>
<dbReference type="InterPro" id="IPR036599">
    <property type="entry name" value="DNA_ligase_N_sf"/>
</dbReference>
<dbReference type="InterPro" id="IPR012340">
    <property type="entry name" value="NA-bd_OB-fold"/>
</dbReference>
<dbReference type="NCBIfam" id="TIGR00574">
    <property type="entry name" value="dnl1"/>
    <property type="match status" value="1"/>
</dbReference>
<dbReference type="NCBIfam" id="NF002868">
    <property type="entry name" value="PRK03180.1"/>
    <property type="match status" value="1"/>
</dbReference>
<dbReference type="PANTHER" id="PTHR45674">
    <property type="entry name" value="DNA LIGASE 1/3 FAMILY MEMBER"/>
    <property type="match status" value="1"/>
</dbReference>
<dbReference type="PANTHER" id="PTHR45674:SF13">
    <property type="entry name" value="DNA LIGASE-RELATED"/>
    <property type="match status" value="1"/>
</dbReference>
<dbReference type="Pfam" id="PF04679">
    <property type="entry name" value="DNA_ligase_A_C"/>
    <property type="match status" value="1"/>
</dbReference>
<dbReference type="Pfam" id="PF01068">
    <property type="entry name" value="DNA_ligase_A_M"/>
    <property type="match status" value="1"/>
</dbReference>
<dbReference type="Pfam" id="PF04675">
    <property type="entry name" value="DNA_ligase_A_N"/>
    <property type="match status" value="1"/>
</dbReference>
<dbReference type="SUPFAM" id="SSF117018">
    <property type="entry name" value="ATP-dependent DNA ligase DNA-binding domain"/>
    <property type="match status" value="1"/>
</dbReference>
<dbReference type="SUPFAM" id="SSF56091">
    <property type="entry name" value="DNA ligase/mRNA capping enzyme, catalytic domain"/>
    <property type="match status" value="1"/>
</dbReference>
<dbReference type="SUPFAM" id="SSF50249">
    <property type="entry name" value="Nucleic acid-binding proteins"/>
    <property type="match status" value="1"/>
</dbReference>
<dbReference type="PROSITE" id="PS00697">
    <property type="entry name" value="DNA_LIGASE_A1"/>
    <property type="match status" value="1"/>
</dbReference>
<dbReference type="PROSITE" id="PS00333">
    <property type="entry name" value="DNA_LIGASE_A2"/>
    <property type="match status" value="1"/>
</dbReference>
<dbReference type="PROSITE" id="PS50160">
    <property type="entry name" value="DNA_LIGASE_A3"/>
    <property type="match status" value="1"/>
</dbReference>
<proteinExistence type="inferred from homology"/>
<organism>
    <name type="scientific">Mycolicibacterium gilvum (strain PYR-GCK)</name>
    <name type="common">Mycobacterium gilvum (strain PYR-GCK)</name>
    <dbReference type="NCBI Taxonomy" id="350054"/>
    <lineage>
        <taxon>Bacteria</taxon>
        <taxon>Bacillati</taxon>
        <taxon>Actinomycetota</taxon>
        <taxon>Actinomycetes</taxon>
        <taxon>Mycobacteriales</taxon>
        <taxon>Mycobacteriaceae</taxon>
        <taxon>Mycolicibacterium</taxon>
    </lineage>
</organism>